<keyword id="KW-0067">ATP-binding</keyword>
<keyword id="KW-0342">GTP-binding</keyword>
<keyword id="KW-0547">Nucleotide-binding</keyword>
<comment type="function">
    <text evidence="1">Displays ATPase and GTPase activities.</text>
</comment>
<comment type="similarity">
    <text evidence="1">Belongs to the RapZ-like family.</text>
</comment>
<protein>
    <recommendedName>
        <fullName evidence="1">Nucleotide-binding protein Cbei_4857</fullName>
    </recommendedName>
</protein>
<proteinExistence type="inferred from homology"/>
<reference key="1">
    <citation type="submission" date="2007-06" db="EMBL/GenBank/DDBJ databases">
        <title>Complete sequence of Clostridium beijerinckii NCIMB 8052.</title>
        <authorList>
            <consortium name="US DOE Joint Genome Institute"/>
            <person name="Copeland A."/>
            <person name="Lucas S."/>
            <person name="Lapidus A."/>
            <person name="Barry K."/>
            <person name="Detter J.C."/>
            <person name="Glavina del Rio T."/>
            <person name="Hammon N."/>
            <person name="Israni S."/>
            <person name="Dalin E."/>
            <person name="Tice H."/>
            <person name="Pitluck S."/>
            <person name="Sims D."/>
            <person name="Brettin T."/>
            <person name="Bruce D."/>
            <person name="Tapia R."/>
            <person name="Brainard J."/>
            <person name="Schmutz J."/>
            <person name="Larimer F."/>
            <person name="Land M."/>
            <person name="Hauser L."/>
            <person name="Kyrpides N."/>
            <person name="Mikhailova N."/>
            <person name="Bennet G."/>
            <person name="Cann I."/>
            <person name="Chen J.-S."/>
            <person name="Contreras A.L."/>
            <person name="Jones D."/>
            <person name="Kashket E."/>
            <person name="Mitchell W."/>
            <person name="Stoddard S."/>
            <person name="Schwarz W."/>
            <person name="Qureshi N."/>
            <person name="Young M."/>
            <person name="Shi Z."/>
            <person name="Ezeji T."/>
            <person name="White B."/>
            <person name="Blaschek H."/>
            <person name="Richardson P."/>
        </authorList>
    </citation>
    <scope>NUCLEOTIDE SEQUENCE [LARGE SCALE GENOMIC DNA]</scope>
    <source>
        <strain>ATCC 51743 / NCIMB 8052</strain>
    </source>
</reference>
<name>Y4857_CLOB8</name>
<gene>
    <name type="ordered locus">Cbei_4857</name>
</gene>
<accession>A6M2Y3</accession>
<sequence length="294" mass="33925">MRFVIVTGLSGAGKTQATRTLEDLGYFCVDNLPPKLISKFAEVCTQSGGNIEKVALVIDIRGGIFFDDFFEALNYLKKNEFKYEILFLEATDEVLIKRFKETRRSHPLSPDGRVLTGITQEREKLREVKNIADIIIDTSKYEIRHLREKINKNYGDHTYPEKQLSITVLSFGFKYGIPVDSDLVFDVRFIPNPFYIPELKQYSGNDEPVKDYVLKQEETVNFIEKLVDMLRYLIPNYIKEGKSQLIISIGCTGGRHRSVAIANEVYERLNKENYNSKIEHRDVAEDLHKGEKKL</sequence>
<dbReference type="EMBL" id="CP000721">
    <property type="protein sequence ID" value="ABR36963.1"/>
    <property type="molecule type" value="Genomic_DNA"/>
</dbReference>
<dbReference type="SMR" id="A6M2Y3"/>
<dbReference type="KEGG" id="cbe:Cbei_4857"/>
<dbReference type="eggNOG" id="COG1660">
    <property type="taxonomic scope" value="Bacteria"/>
</dbReference>
<dbReference type="HOGENOM" id="CLU_059558_0_0_9"/>
<dbReference type="Proteomes" id="UP000000565">
    <property type="component" value="Chromosome"/>
</dbReference>
<dbReference type="GO" id="GO:0005524">
    <property type="term" value="F:ATP binding"/>
    <property type="evidence" value="ECO:0007669"/>
    <property type="project" value="UniProtKB-UniRule"/>
</dbReference>
<dbReference type="GO" id="GO:0005525">
    <property type="term" value="F:GTP binding"/>
    <property type="evidence" value="ECO:0007669"/>
    <property type="project" value="UniProtKB-UniRule"/>
</dbReference>
<dbReference type="Gene3D" id="3.40.50.300">
    <property type="entry name" value="P-loop containing nucleotide triphosphate hydrolases"/>
    <property type="match status" value="1"/>
</dbReference>
<dbReference type="HAMAP" id="MF_00636">
    <property type="entry name" value="RapZ_like"/>
    <property type="match status" value="1"/>
</dbReference>
<dbReference type="InterPro" id="IPR027417">
    <property type="entry name" value="P-loop_NTPase"/>
</dbReference>
<dbReference type="InterPro" id="IPR005337">
    <property type="entry name" value="RapZ-like"/>
</dbReference>
<dbReference type="InterPro" id="IPR053930">
    <property type="entry name" value="RapZ-like_N"/>
</dbReference>
<dbReference type="InterPro" id="IPR053931">
    <property type="entry name" value="RapZ_C"/>
</dbReference>
<dbReference type="NCBIfam" id="NF003828">
    <property type="entry name" value="PRK05416.1"/>
    <property type="match status" value="1"/>
</dbReference>
<dbReference type="PANTHER" id="PTHR30448">
    <property type="entry name" value="RNASE ADAPTER PROTEIN RAPZ"/>
    <property type="match status" value="1"/>
</dbReference>
<dbReference type="PANTHER" id="PTHR30448:SF0">
    <property type="entry name" value="RNASE ADAPTER PROTEIN RAPZ"/>
    <property type="match status" value="1"/>
</dbReference>
<dbReference type="Pfam" id="PF22740">
    <property type="entry name" value="PapZ_C"/>
    <property type="match status" value="1"/>
</dbReference>
<dbReference type="Pfam" id="PF03668">
    <property type="entry name" value="RapZ-like_N"/>
    <property type="match status" value="1"/>
</dbReference>
<dbReference type="PIRSF" id="PIRSF005052">
    <property type="entry name" value="P-loopkin"/>
    <property type="match status" value="1"/>
</dbReference>
<dbReference type="SUPFAM" id="SSF52540">
    <property type="entry name" value="P-loop containing nucleoside triphosphate hydrolases"/>
    <property type="match status" value="1"/>
</dbReference>
<organism>
    <name type="scientific">Clostridium beijerinckii (strain ATCC 51743 / NCIMB 8052)</name>
    <name type="common">Clostridium acetobutylicum</name>
    <dbReference type="NCBI Taxonomy" id="290402"/>
    <lineage>
        <taxon>Bacteria</taxon>
        <taxon>Bacillati</taxon>
        <taxon>Bacillota</taxon>
        <taxon>Clostridia</taxon>
        <taxon>Eubacteriales</taxon>
        <taxon>Clostridiaceae</taxon>
        <taxon>Clostridium</taxon>
    </lineage>
</organism>
<feature type="chain" id="PRO_1000082656" description="Nucleotide-binding protein Cbei_4857">
    <location>
        <begin position="1"/>
        <end position="294"/>
    </location>
</feature>
<feature type="binding site" evidence="1">
    <location>
        <begin position="8"/>
        <end position="15"/>
    </location>
    <ligand>
        <name>ATP</name>
        <dbReference type="ChEBI" id="CHEBI:30616"/>
    </ligand>
</feature>
<feature type="binding site" evidence="1">
    <location>
        <begin position="59"/>
        <end position="62"/>
    </location>
    <ligand>
        <name>GTP</name>
        <dbReference type="ChEBI" id="CHEBI:37565"/>
    </ligand>
</feature>
<evidence type="ECO:0000255" key="1">
    <source>
        <dbReference type="HAMAP-Rule" id="MF_00636"/>
    </source>
</evidence>